<proteinExistence type="inferred from homology"/>
<keyword id="KW-0963">Cytoplasm</keyword>
<keyword id="KW-0255">Endonuclease</keyword>
<keyword id="KW-0378">Hydrolase</keyword>
<keyword id="KW-0464">Manganese</keyword>
<keyword id="KW-0479">Metal-binding</keyword>
<keyword id="KW-0540">Nuclease</keyword>
<keyword id="KW-1185">Reference proteome</keyword>
<reference key="1">
    <citation type="journal article" date="2008" name="Proc. Natl. Acad. Sci. U.S.A.">
        <title>Nitrogen fixation island and rhizosphere competence traits in the genome of root-associated Pseudomonas stutzeri A1501.</title>
        <authorList>
            <person name="Yan Y."/>
            <person name="Yang J."/>
            <person name="Dou Y."/>
            <person name="Chen M."/>
            <person name="Ping S."/>
            <person name="Peng J."/>
            <person name="Lu W."/>
            <person name="Zhang W."/>
            <person name="Yao Z."/>
            <person name="Li H."/>
            <person name="Liu W."/>
            <person name="He S."/>
            <person name="Geng L."/>
            <person name="Zhang X."/>
            <person name="Yang F."/>
            <person name="Yu H."/>
            <person name="Zhan Y."/>
            <person name="Li D."/>
            <person name="Lin Z."/>
            <person name="Wang Y."/>
            <person name="Elmerich C."/>
            <person name="Lin M."/>
            <person name="Jin Q."/>
        </authorList>
    </citation>
    <scope>NUCLEOTIDE SEQUENCE [LARGE SCALE GENOMIC DNA]</scope>
    <source>
        <strain>A1501</strain>
    </source>
</reference>
<gene>
    <name evidence="1" type="primary">rnhB</name>
    <name type="ordered locus">PST_1551</name>
</gene>
<name>RNH2_STUS1</name>
<feature type="chain" id="PRO_1000031184" description="Ribonuclease HII">
    <location>
        <begin position="1"/>
        <end position="212"/>
    </location>
</feature>
<feature type="domain" description="RNase H type-2" evidence="2">
    <location>
        <begin position="12"/>
        <end position="201"/>
    </location>
</feature>
<feature type="binding site" evidence="1">
    <location>
        <position position="18"/>
    </location>
    <ligand>
        <name>a divalent metal cation</name>
        <dbReference type="ChEBI" id="CHEBI:60240"/>
    </ligand>
</feature>
<feature type="binding site" evidence="1">
    <location>
        <position position="19"/>
    </location>
    <ligand>
        <name>a divalent metal cation</name>
        <dbReference type="ChEBI" id="CHEBI:60240"/>
    </ligand>
</feature>
<feature type="binding site" evidence="1">
    <location>
        <position position="110"/>
    </location>
    <ligand>
        <name>a divalent metal cation</name>
        <dbReference type="ChEBI" id="CHEBI:60240"/>
    </ligand>
</feature>
<protein>
    <recommendedName>
        <fullName evidence="1">Ribonuclease HII</fullName>
        <shortName evidence="1">RNase HII</shortName>
        <ecNumber evidence="1">3.1.26.4</ecNumber>
    </recommendedName>
</protein>
<evidence type="ECO:0000255" key="1">
    <source>
        <dbReference type="HAMAP-Rule" id="MF_00052"/>
    </source>
</evidence>
<evidence type="ECO:0000255" key="2">
    <source>
        <dbReference type="PROSITE-ProRule" id="PRU01319"/>
    </source>
</evidence>
<dbReference type="EC" id="3.1.26.4" evidence="1"/>
<dbReference type="EMBL" id="CP000304">
    <property type="protein sequence ID" value="ABP79236.1"/>
    <property type="molecule type" value="Genomic_DNA"/>
</dbReference>
<dbReference type="RefSeq" id="WP_011912714.1">
    <property type="nucleotide sequence ID" value="NC_009434.1"/>
</dbReference>
<dbReference type="SMR" id="A4VJT5"/>
<dbReference type="GeneID" id="66820697"/>
<dbReference type="KEGG" id="psa:PST_1551"/>
<dbReference type="eggNOG" id="COG0164">
    <property type="taxonomic scope" value="Bacteria"/>
</dbReference>
<dbReference type="HOGENOM" id="CLU_036532_3_2_6"/>
<dbReference type="Proteomes" id="UP000000233">
    <property type="component" value="Chromosome"/>
</dbReference>
<dbReference type="GO" id="GO:0005737">
    <property type="term" value="C:cytoplasm"/>
    <property type="evidence" value="ECO:0007669"/>
    <property type="project" value="UniProtKB-SubCell"/>
</dbReference>
<dbReference type="GO" id="GO:0032299">
    <property type="term" value="C:ribonuclease H2 complex"/>
    <property type="evidence" value="ECO:0007669"/>
    <property type="project" value="TreeGrafter"/>
</dbReference>
<dbReference type="GO" id="GO:0030145">
    <property type="term" value="F:manganese ion binding"/>
    <property type="evidence" value="ECO:0007669"/>
    <property type="project" value="UniProtKB-UniRule"/>
</dbReference>
<dbReference type="GO" id="GO:0003723">
    <property type="term" value="F:RNA binding"/>
    <property type="evidence" value="ECO:0007669"/>
    <property type="project" value="InterPro"/>
</dbReference>
<dbReference type="GO" id="GO:0004523">
    <property type="term" value="F:RNA-DNA hybrid ribonuclease activity"/>
    <property type="evidence" value="ECO:0007669"/>
    <property type="project" value="UniProtKB-UniRule"/>
</dbReference>
<dbReference type="GO" id="GO:0043137">
    <property type="term" value="P:DNA replication, removal of RNA primer"/>
    <property type="evidence" value="ECO:0007669"/>
    <property type="project" value="TreeGrafter"/>
</dbReference>
<dbReference type="GO" id="GO:0006298">
    <property type="term" value="P:mismatch repair"/>
    <property type="evidence" value="ECO:0007669"/>
    <property type="project" value="TreeGrafter"/>
</dbReference>
<dbReference type="CDD" id="cd07182">
    <property type="entry name" value="RNase_HII_bacteria_HII_like"/>
    <property type="match status" value="1"/>
</dbReference>
<dbReference type="FunFam" id="3.30.420.10:FF:000006">
    <property type="entry name" value="Ribonuclease HII"/>
    <property type="match status" value="1"/>
</dbReference>
<dbReference type="Gene3D" id="3.30.420.10">
    <property type="entry name" value="Ribonuclease H-like superfamily/Ribonuclease H"/>
    <property type="match status" value="1"/>
</dbReference>
<dbReference type="HAMAP" id="MF_00052_B">
    <property type="entry name" value="RNase_HII_B"/>
    <property type="match status" value="1"/>
</dbReference>
<dbReference type="InterPro" id="IPR022898">
    <property type="entry name" value="RNase_HII"/>
</dbReference>
<dbReference type="InterPro" id="IPR001352">
    <property type="entry name" value="RNase_HII/HIII"/>
</dbReference>
<dbReference type="InterPro" id="IPR024567">
    <property type="entry name" value="RNase_HII/HIII_dom"/>
</dbReference>
<dbReference type="InterPro" id="IPR012337">
    <property type="entry name" value="RNaseH-like_sf"/>
</dbReference>
<dbReference type="InterPro" id="IPR036397">
    <property type="entry name" value="RNaseH_sf"/>
</dbReference>
<dbReference type="NCBIfam" id="NF000594">
    <property type="entry name" value="PRK00015.1-1"/>
    <property type="match status" value="1"/>
</dbReference>
<dbReference type="NCBIfam" id="NF000595">
    <property type="entry name" value="PRK00015.1-3"/>
    <property type="match status" value="1"/>
</dbReference>
<dbReference type="NCBIfam" id="NF000596">
    <property type="entry name" value="PRK00015.1-4"/>
    <property type="match status" value="1"/>
</dbReference>
<dbReference type="PANTHER" id="PTHR10954">
    <property type="entry name" value="RIBONUCLEASE H2 SUBUNIT A"/>
    <property type="match status" value="1"/>
</dbReference>
<dbReference type="PANTHER" id="PTHR10954:SF18">
    <property type="entry name" value="RIBONUCLEASE HII"/>
    <property type="match status" value="1"/>
</dbReference>
<dbReference type="Pfam" id="PF01351">
    <property type="entry name" value="RNase_HII"/>
    <property type="match status" value="1"/>
</dbReference>
<dbReference type="SUPFAM" id="SSF53098">
    <property type="entry name" value="Ribonuclease H-like"/>
    <property type="match status" value="1"/>
</dbReference>
<dbReference type="PROSITE" id="PS51975">
    <property type="entry name" value="RNASE_H_2"/>
    <property type="match status" value="1"/>
</dbReference>
<sequence length="212" mass="22869">MQFGLDFNLVEELVAGVDEVGRGPLCGPVVTAAVILDPARPIEGLNDSKKLTEARREALFDEIREKAVAWCIARAEVEEIDQLNILHATMLAMQRAVEGLSVTPRLALIDGNRCPQLAVPSAPVIQGDAQVPAIAAASILAKVSRDREMQALDLCYPGYGLAGHKGYPTPSHLEALRRLGPTPIHRRSFAPVRAMLEQVSIEVEVPASVLLV</sequence>
<comment type="function">
    <text evidence="1">Endonuclease that specifically degrades the RNA of RNA-DNA hybrids.</text>
</comment>
<comment type="catalytic activity">
    <reaction evidence="1">
        <text>Endonucleolytic cleavage to 5'-phosphomonoester.</text>
        <dbReference type="EC" id="3.1.26.4"/>
    </reaction>
</comment>
<comment type="cofactor">
    <cofactor evidence="1">
        <name>Mn(2+)</name>
        <dbReference type="ChEBI" id="CHEBI:29035"/>
    </cofactor>
    <cofactor evidence="1">
        <name>Mg(2+)</name>
        <dbReference type="ChEBI" id="CHEBI:18420"/>
    </cofactor>
    <text evidence="1">Manganese or magnesium. Binds 1 divalent metal ion per monomer in the absence of substrate. May bind a second metal ion after substrate binding.</text>
</comment>
<comment type="subcellular location">
    <subcellularLocation>
        <location evidence="1">Cytoplasm</location>
    </subcellularLocation>
</comment>
<comment type="similarity">
    <text evidence="1">Belongs to the RNase HII family.</text>
</comment>
<organism>
    <name type="scientific">Stutzerimonas stutzeri (strain A1501)</name>
    <name type="common">Pseudomonas stutzeri</name>
    <dbReference type="NCBI Taxonomy" id="379731"/>
    <lineage>
        <taxon>Bacteria</taxon>
        <taxon>Pseudomonadati</taxon>
        <taxon>Pseudomonadota</taxon>
        <taxon>Gammaproteobacteria</taxon>
        <taxon>Pseudomonadales</taxon>
        <taxon>Pseudomonadaceae</taxon>
        <taxon>Stutzerimonas</taxon>
    </lineage>
</organism>
<accession>A4VJT5</accession>